<organism>
    <name type="scientific">Geotalea uraniireducens (strain Rf4)</name>
    <name type="common">Geobacter uraniireducens</name>
    <dbReference type="NCBI Taxonomy" id="351605"/>
    <lineage>
        <taxon>Bacteria</taxon>
        <taxon>Pseudomonadati</taxon>
        <taxon>Thermodesulfobacteriota</taxon>
        <taxon>Desulfuromonadia</taxon>
        <taxon>Geobacterales</taxon>
        <taxon>Geobacteraceae</taxon>
        <taxon>Geotalea</taxon>
    </lineage>
</organism>
<keyword id="KW-0963">Cytoplasm</keyword>
<keyword id="KW-0274">FAD</keyword>
<keyword id="KW-0285">Flavoprotein</keyword>
<keyword id="KW-0489">Methyltransferase</keyword>
<keyword id="KW-0520">NAD</keyword>
<keyword id="KW-0521">NADP</keyword>
<keyword id="KW-1185">Reference proteome</keyword>
<keyword id="KW-0808">Transferase</keyword>
<keyword id="KW-0819">tRNA processing</keyword>
<gene>
    <name evidence="1" type="primary">trmFO</name>
    <name type="ordered locus">Gura_3688</name>
</gene>
<feature type="chain" id="PRO_0000346341" description="Methylenetetrahydrofolate--tRNA-(uracil-5-)-methyltransferase TrmFO">
    <location>
        <begin position="1"/>
        <end position="435"/>
    </location>
</feature>
<feature type="binding site" evidence="1">
    <location>
        <begin position="10"/>
        <end position="15"/>
    </location>
    <ligand>
        <name>FAD</name>
        <dbReference type="ChEBI" id="CHEBI:57692"/>
    </ligand>
</feature>
<accession>A5G7S3</accession>
<protein>
    <recommendedName>
        <fullName evidence="1">Methylenetetrahydrofolate--tRNA-(uracil-5-)-methyltransferase TrmFO</fullName>
        <ecNumber evidence="1">2.1.1.74</ecNumber>
    </recommendedName>
    <alternativeName>
        <fullName evidence="1">Folate-dependent tRNA (uracil-5-)-methyltransferase</fullName>
    </alternativeName>
    <alternativeName>
        <fullName evidence="1">Folate-dependent tRNA(M-5-U54)-methyltransferase</fullName>
    </alternativeName>
</protein>
<reference key="1">
    <citation type="submission" date="2007-05" db="EMBL/GenBank/DDBJ databases">
        <title>Complete sequence of Geobacter uraniireducens Rf4.</title>
        <authorList>
            <consortium name="US DOE Joint Genome Institute"/>
            <person name="Copeland A."/>
            <person name="Lucas S."/>
            <person name="Lapidus A."/>
            <person name="Barry K."/>
            <person name="Detter J.C."/>
            <person name="Glavina del Rio T."/>
            <person name="Hammon N."/>
            <person name="Israni S."/>
            <person name="Dalin E."/>
            <person name="Tice H."/>
            <person name="Pitluck S."/>
            <person name="Chertkov O."/>
            <person name="Brettin T."/>
            <person name="Bruce D."/>
            <person name="Han C."/>
            <person name="Schmutz J."/>
            <person name="Larimer F."/>
            <person name="Land M."/>
            <person name="Hauser L."/>
            <person name="Kyrpides N."/>
            <person name="Mikhailova N."/>
            <person name="Shelobolina E."/>
            <person name="Aklujkar M."/>
            <person name="Lovley D."/>
            <person name="Richardson P."/>
        </authorList>
    </citation>
    <scope>NUCLEOTIDE SEQUENCE [LARGE SCALE GENOMIC DNA]</scope>
    <source>
        <strain>ATCC BAA-1134 / JCM 13001 / Rf4</strain>
    </source>
</reference>
<dbReference type="EC" id="2.1.1.74" evidence="1"/>
<dbReference type="EMBL" id="CP000698">
    <property type="protein sequence ID" value="ABQ27841.1"/>
    <property type="molecule type" value="Genomic_DNA"/>
</dbReference>
<dbReference type="RefSeq" id="WP_011940494.1">
    <property type="nucleotide sequence ID" value="NC_009483.1"/>
</dbReference>
<dbReference type="SMR" id="A5G7S3"/>
<dbReference type="STRING" id="351605.Gura_3688"/>
<dbReference type="KEGG" id="gur:Gura_3688"/>
<dbReference type="HOGENOM" id="CLU_033057_1_0_7"/>
<dbReference type="Proteomes" id="UP000006695">
    <property type="component" value="Chromosome"/>
</dbReference>
<dbReference type="GO" id="GO:0005829">
    <property type="term" value="C:cytosol"/>
    <property type="evidence" value="ECO:0007669"/>
    <property type="project" value="TreeGrafter"/>
</dbReference>
<dbReference type="GO" id="GO:0050660">
    <property type="term" value="F:flavin adenine dinucleotide binding"/>
    <property type="evidence" value="ECO:0007669"/>
    <property type="project" value="UniProtKB-UniRule"/>
</dbReference>
<dbReference type="GO" id="GO:0047151">
    <property type="term" value="F:tRNA (uracil(54)-C5)-methyltransferase activity, 5,10-methylenetetrahydrofolate-dependent"/>
    <property type="evidence" value="ECO:0007669"/>
    <property type="project" value="UniProtKB-UniRule"/>
</dbReference>
<dbReference type="GO" id="GO:0030488">
    <property type="term" value="P:tRNA methylation"/>
    <property type="evidence" value="ECO:0007669"/>
    <property type="project" value="TreeGrafter"/>
</dbReference>
<dbReference type="GO" id="GO:0002098">
    <property type="term" value="P:tRNA wobble uridine modification"/>
    <property type="evidence" value="ECO:0007669"/>
    <property type="project" value="TreeGrafter"/>
</dbReference>
<dbReference type="Gene3D" id="3.50.50.60">
    <property type="entry name" value="FAD/NAD(P)-binding domain"/>
    <property type="match status" value="2"/>
</dbReference>
<dbReference type="HAMAP" id="MF_01037">
    <property type="entry name" value="TrmFO"/>
    <property type="match status" value="1"/>
</dbReference>
<dbReference type="InterPro" id="IPR036188">
    <property type="entry name" value="FAD/NAD-bd_sf"/>
</dbReference>
<dbReference type="InterPro" id="IPR002218">
    <property type="entry name" value="MnmG-rel"/>
</dbReference>
<dbReference type="InterPro" id="IPR040131">
    <property type="entry name" value="MnmG_N"/>
</dbReference>
<dbReference type="InterPro" id="IPR004417">
    <property type="entry name" value="TrmFO"/>
</dbReference>
<dbReference type="NCBIfam" id="TIGR00137">
    <property type="entry name" value="gid_trmFO"/>
    <property type="match status" value="1"/>
</dbReference>
<dbReference type="NCBIfam" id="NF003739">
    <property type="entry name" value="PRK05335.1"/>
    <property type="match status" value="1"/>
</dbReference>
<dbReference type="PANTHER" id="PTHR11806">
    <property type="entry name" value="GLUCOSE INHIBITED DIVISION PROTEIN A"/>
    <property type="match status" value="1"/>
</dbReference>
<dbReference type="PANTHER" id="PTHR11806:SF2">
    <property type="entry name" value="METHYLENETETRAHYDROFOLATE--TRNA-(URACIL-5-)-METHYLTRANSFERASE TRMFO"/>
    <property type="match status" value="1"/>
</dbReference>
<dbReference type="Pfam" id="PF01134">
    <property type="entry name" value="GIDA"/>
    <property type="match status" value="1"/>
</dbReference>
<dbReference type="SUPFAM" id="SSF51905">
    <property type="entry name" value="FAD/NAD(P)-binding domain"/>
    <property type="match status" value="1"/>
</dbReference>
<comment type="function">
    <text evidence="1">Catalyzes the folate-dependent formation of 5-methyl-uridine at position 54 (M-5-U54) in all tRNAs.</text>
</comment>
<comment type="catalytic activity">
    <reaction evidence="1">
        <text>uridine(54) in tRNA + (6R)-5,10-methylene-5,6,7,8-tetrahydrofolate + NADH + H(+) = 5-methyluridine(54) in tRNA + (6S)-5,6,7,8-tetrahydrofolate + NAD(+)</text>
        <dbReference type="Rhea" id="RHEA:16873"/>
        <dbReference type="Rhea" id="RHEA-COMP:10167"/>
        <dbReference type="Rhea" id="RHEA-COMP:10193"/>
        <dbReference type="ChEBI" id="CHEBI:15378"/>
        <dbReference type="ChEBI" id="CHEBI:15636"/>
        <dbReference type="ChEBI" id="CHEBI:57453"/>
        <dbReference type="ChEBI" id="CHEBI:57540"/>
        <dbReference type="ChEBI" id="CHEBI:57945"/>
        <dbReference type="ChEBI" id="CHEBI:65315"/>
        <dbReference type="ChEBI" id="CHEBI:74447"/>
        <dbReference type="EC" id="2.1.1.74"/>
    </reaction>
</comment>
<comment type="catalytic activity">
    <reaction evidence="1">
        <text>uridine(54) in tRNA + (6R)-5,10-methylene-5,6,7,8-tetrahydrofolate + NADPH + H(+) = 5-methyluridine(54) in tRNA + (6S)-5,6,7,8-tetrahydrofolate + NADP(+)</text>
        <dbReference type="Rhea" id="RHEA:62372"/>
        <dbReference type="Rhea" id="RHEA-COMP:10167"/>
        <dbReference type="Rhea" id="RHEA-COMP:10193"/>
        <dbReference type="ChEBI" id="CHEBI:15378"/>
        <dbReference type="ChEBI" id="CHEBI:15636"/>
        <dbReference type="ChEBI" id="CHEBI:57453"/>
        <dbReference type="ChEBI" id="CHEBI:57783"/>
        <dbReference type="ChEBI" id="CHEBI:58349"/>
        <dbReference type="ChEBI" id="CHEBI:65315"/>
        <dbReference type="ChEBI" id="CHEBI:74447"/>
        <dbReference type="EC" id="2.1.1.74"/>
    </reaction>
</comment>
<comment type="cofactor">
    <cofactor evidence="1">
        <name>FAD</name>
        <dbReference type="ChEBI" id="CHEBI:57692"/>
    </cofactor>
</comment>
<comment type="subcellular location">
    <subcellularLocation>
        <location evidence="1">Cytoplasm</location>
    </subcellularLocation>
</comment>
<comment type="similarity">
    <text evidence="1">Belongs to the MnmG family. TrmFO subfamily.</text>
</comment>
<proteinExistence type="inferred from homology"/>
<name>TRMFO_GEOUR</name>
<sequence length="435" mass="46993">MIKEKLTIIGAGLAGCEAAWQAAGRGVAVTLHEMKPEKYSPAHHLPGLAELVCSNSLRGESLENAVGLLKEELRRLGSLFMEAALATRVPAGGALAVDRGLFSAFITDKIENHPLIEVVHGEVAEIPADGTVIVASGPLTSDALAASIGKYTGDYLYFYDAIAPIVTSDSIDLSKAFRASRYGKGDGDDYLNCPLDEAEYKAFIAALLAAEKVAAKEFEKVVHFEGCMPIEEMAERGLDTLRFGPMKPVGLIDPRTGIEPHAVVQLRQENREGTLFNLVGFQTKLTYPEQQRIFRTIPGLGKAEFVRLGSMHRNTFINAPQLLLSTFQLKREPRILFAGQITGVEGYVESAASGFLAGLNGARLAKGEALIVPPSVTALGALVNHITSAPAKHFQPMNINYGLFPDLAGRVKKKEKRAKLAERALTELDGWMNTL</sequence>
<evidence type="ECO:0000255" key="1">
    <source>
        <dbReference type="HAMAP-Rule" id="MF_01037"/>
    </source>
</evidence>